<sequence length="367" mass="41149">MTDNSQVKVIVGMSGGVDSSVSAYLLQQQGYLVEGLFMKNWEEDDTDQYCAAAQDLEDAQSVCDKLGIPLHTINFAAEYWDNVFEHFLAEYKAGRTPNPDIMCNKEIKFKAFLEFAAEDLGADYIATGHYVRRREVDGHVQLLRGLDNNKDQSYFLYAIGEKQIAKSLFPVGELEKPEVRRIAEQQDLITHNKKDSTGICFIGERKFTDFLQEYLPAQPGDIVTPTGEVIGQHQGLMYHTLGQRKGLGIGGLQNSNENPWYVVGKDMDNNRLLVAQGADHPALFSYGLIAKQCDWVDRTPKKSTFRCTVKTRYRQQDIPCTVTPLDDDTLKVIFDTAQAAVTPGQSAVFYNDEVCLGGAIIEEHLQK</sequence>
<gene>
    <name evidence="1" type="primary">mnmA</name>
    <name type="synonym">trmU</name>
    <name type="ordered locus">Ping_0963</name>
</gene>
<accession>A1STI9</accession>
<comment type="function">
    <text evidence="1">Catalyzes the 2-thiolation of uridine at the wobble position (U34) of tRNA, leading to the formation of s(2)U34.</text>
</comment>
<comment type="catalytic activity">
    <reaction evidence="1">
        <text>S-sulfanyl-L-cysteinyl-[protein] + uridine(34) in tRNA + AH2 + ATP = 2-thiouridine(34) in tRNA + L-cysteinyl-[protein] + A + AMP + diphosphate + H(+)</text>
        <dbReference type="Rhea" id="RHEA:47032"/>
        <dbReference type="Rhea" id="RHEA-COMP:10131"/>
        <dbReference type="Rhea" id="RHEA-COMP:11726"/>
        <dbReference type="Rhea" id="RHEA-COMP:11727"/>
        <dbReference type="Rhea" id="RHEA-COMP:11728"/>
        <dbReference type="ChEBI" id="CHEBI:13193"/>
        <dbReference type="ChEBI" id="CHEBI:15378"/>
        <dbReference type="ChEBI" id="CHEBI:17499"/>
        <dbReference type="ChEBI" id="CHEBI:29950"/>
        <dbReference type="ChEBI" id="CHEBI:30616"/>
        <dbReference type="ChEBI" id="CHEBI:33019"/>
        <dbReference type="ChEBI" id="CHEBI:61963"/>
        <dbReference type="ChEBI" id="CHEBI:65315"/>
        <dbReference type="ChEBI" id="CHEBI:87170"/>
        <dbReference type="ChEBI" id="CHEBI:456215"/>
        <dbReference type="EC" id="2.8.1.13"/>
    </reaction>
</comment>
<comment type="subcellular location">
    <subcellularLocation>
        <location evidence="1">Cytoplasm</location>
    </subcellularLocation>
</comment>
<comment type="similarity">
    <text evidence="1">Belongs to the MnmA/TRMU family.</text>
</comment>
<evidence type="ECO:0000255" key="1">
    <source>
        <dbReference type="HAMAP-Rule" id="MF_00144"/>
    </source>
</evidence>
<keyword id="KW-0067">ATP-binding</keyword>
<keyword id="KW-0963">Cytoplasm</keyword>
<keyword id="KW-1015">Disulfide bond</keyword>
<keyword id="KW-0547">Nucleotide-binding</keyword>
<keyword id="KW-1185">Reference proteome</keyword>
<keyword id="KW-0694">RNA-binding</keyword>
<keyword id="KW-0808">Transferase</keyword>
<keyword id="KW-0819">tRNA processing</keyword>
<keyword id="KW-0820">tRNA-binding</keyword>
<name>MNMA_PSYIN</name>
<protein>
    <recommendedName>
        <fullName evidence="1">tRNA-specific 2-thiouridylase MnmA</fullName>
        <ecNumber evidence="1">2.8.1.13</ecNumber>
    </recommendedName>
</protein>
<proteinExistence type="inferred from homology"/>
<dbReference type="EC" id="2.8.1.13" evidence="1"/>
<dbReference type="EMBL" id="CP000510">
    <property type="protein sequence ID" value="ABM02804.1"/>
    <property type="molecule type" value="Genomic_DNA"/>
</dbReference>
<dbReference type="RefSeq" id="WP_011769367.1">
    <property type="nucleotide sequence ID" value="NC_008709.1"/>
</dbReference>
<dbReference type="SMR" id="A1STI9"/>
<dbReference type="STRING" id="357804.Ping_0963"/>
<dbReference type="KEGG" id="pin:Ping_0963"/>
<dbReference type="eggNOG" id="COG0482">
    <property type="taxonomic scope" value="Bacteria"/>
</dbReference>
<dbReference type="HOGENOM" id="CLU_035188_1_0_6"/>
<dbReference type="OrthoDB" id="9800696at2"/>
<dbReference type="Proteomes" id="UP000000639">
    <property type="component" value="Chromosome"/>
</dbReference>
<dbReference type="GO" id="GO:0005737">
    <property type="term" value="C:cytoplasm"/>
    <property type="evidence" value="ECO:0007669"/>
    <property type="project" value="UniProtKB-SubCell"/>
</dbReference>
<dbReference type="GO" id="GO:0005524">
    <property type="term" value="F:ATP binding"/>
    <property type="evidence" value="ECO:0007669"/>
    <property type="project" value="UniProtKB-KW"/>
</dbReference>
<dbReference type="GO" id="GO:0000049">
    <property type="term" value="F:tRNA binding"/>
    <property type="evidence" value="ECO:0007669"/>
    <property type="project" value="UniProtKB-KW"/>
</dbReference>
<dbReference type="GO" id="GO:0103016">
    <property type="term" value="F:tRNA-uridine 2-sulfurtransferase activity"/>
    <property type="evidence" value="ECO:0007669"/>
    <property type="project" value="UniProtKB-EC"/>
</dbReference>
<dbReference type="GO" id="GO:0002143">
    <property type="term" value="P:tRNA wobble position uridine thiolation"/>
    <property type="evidence" value="ECO:0007669"/>
    <property type="project" value="TreeGrafter"/>
</dbReference>
<dbReference type="CDD" id="cd01998">
    <property type="entry name" value="MnmA_TRMU-like"/>
    <property type="match status" value="1"/>
</dbReference>
<dbReference type="FunFam" id="2.30.30.280:FF:000001">
    <property type="entry name" value="tRNA-specific 2-thiouridylase MnmA"/>
    <property type="match status" value="1"/>
</dbReference>
<dbReference type="FunFam" id="2.40.30.10:FF:000023">
    <property type="entry name" value="tRNA-specific 2-thiouridylase MnmA"/>
    <property type="match status" value="1"/>
</dbReference>
<dbReference type="FunFam" id="3.40.50.620:FF:000004">
    <property type="entry name" value="tRNA-specific 2-thiouridylase MnmA"/>
    <property type="match status" value="1"/>
</dbReference>
<dbReference type="Gene3D" id="2.30.30.280">
    <property type="entry name" value="Adenine nucleotide alpha hydrolases-like domains"/>
    <property type="match status" value="1"/>
</dbReference>
<dbReference type="Gene3D" id="3.40.50.620">
    <property type="entry name" value="HUPs"/>
    <property type="match status" value="1"/>
</dbReference>
<dbReference type="Gene3D" id="2.40.30.10">
    <property type="entry name" value="Translation factors"/>
    <property type="match status" value="1"/>
</dbReference>
<dbReference type="HAMAP" id="MF_00144">
    <property type="entry name" value="tRNA_thiouridyl_MnmA"/>
    <property type="match status" value="1"/>
</dbReference>
<dbReference type="InterPro" id="IPR004506">
    <property type="entry name" value="MnmA-like"/>
</dbReference>
<dbReference type="InterPro" id="IPR046885">
    <property type="entry name" value="MnmA-like_C"/>
</dbReference>
<dbReference type="InterPro" id="IPR046884">
    <property type="entry name" value="MnmA-like_central"/>
</dbReference>
<dbReference type="InterPro" id="IPR023382">
    <property type="entry name" value="MnmA-like_central_sf"/>
</dbReference>
<dbReference type="InterPro" id="IPR014729">
    <property type="entry name" value="Rossmann-like_a/b/a_fold"/>
</dbReference>
<dbReference type="NCBIfam" id="NF001138">
    <property type="entry name" value="PRK00143.1"/>
    <property type="match status" value="1"/>
</dbReference>
<dbReference type="NCBIfam" id="TIGR00420">
    <property type="entry name" value="trmU"/>
    <property type="match status" value="1"/>
</dbReference>
<dbReference type="PANTHER" id="PTHR11933:SF5">
    <property type="entry name" value="MITOCHONDRIAL TRNA-SPECIFIC 2-THIOURIDYLASE 1"/>
    <property type="match status" value="1"/>
</dbReference>
<dbReference type="PANTHER" id="PTHR11933">
    <property type="entry name" value="TRNA 5-METHYLAMINOMETHYL-2-THIOURIDYLATE -METHYLTRANSFERASE"/>
    <property type="match status" value="1"/>
</dbReference>
<dbReference type="Pfam" id="PF03054">
    <property type="entry name" value="tRNA_Me_trans"/>
    <property type="match status" value="1"/>
</dbReference>
<dbReference type="Pfam" id="PF20258">
    <property type="entry name" value="tRNA_Me_trans_C"/>
    <property type="match status" value="1"/>
</dbReference>
<dbReference type="Pfam" id="PF20259">
    <property type="entry name" value="tRNA_Me_trans_M"/>
    <property type="match status" value="1"/>
</dbReference>
<dbReference type="SUPFAM" id="SSF52402">
    <property type="entry name" value="Adenine nucleotide alpha hydrolases-like"/>
    <property type="match status" value="1"/>
</dbReference>
<feature type="chain" id="PRO_1000009560" description="tRNA-specific 2-thiouridylase MnmA">
    <location>
        <begin position="1"/>
        <end position="367"/>
    </location>
</feature>
<feature type="region of interest" description="Interaction with target base in tRNA" evidence="1">
    <location>
        <begin position="98"/>
        <end position="100"/>
    </location>
</feature>
<feature type="region of interest" description="Interaction with tRNA" evidence="1">
    <location>
        <begin position="150"/>
        <end position="152"/>
    </location>
</feature>
<feature type="region of interest" description="Interaction with tRNA" evidence="1">
    <location>
        <begin position="312"/>
        <end position="313"/>
    </location>
</feature>
<feature type="active site" description="Nucleophile" evidence="1">
    <location>
        <position position="103"/>
    </location>
</feature>
<feature type="active site" description="Cysteine persulfide intermediate" evidence="1">
    <location>
        <position position="200"/>
    </location>
</feature>
<feature type="binding site" evidence="1">
    <location>
        <begin position="12"/>
        <end position="19"/>
    </location>
    <ligand>
        <name>ATP</name>
        <dbReference type="ChEBI" id="CHEBI:30616"/>
    </ligand>
</feature>
<feature type="binding site" evidence="1">
    <location>
        <position position="38"/>
    </location>
    <ligand>
        <name>ATP</name>
        <dbReference type="ChEBI" id="CHEBI:30616"/>
    </ligand>
</feature>
<feature type="binding site" evidence="1">
    <location>
        <position position="128"/>
    </location>
    <ligand>
        <name>ATP</name>
        <dbReference type="ChEBI" id="CHEBI:30616"/>
    </ligand>
</feature>
<feature type="site" description="Interaction with tRNA" evidence="1">
    <location>
        <position position="129"/>
    </location>
</feature>
<feature type="site" description="Interaction with tRNA" evidence="1">
    <location>
        <position position="345"/>
    </location>
</feature>
<feature type="disulfide bond" description="Alternate" evidence="1">
    <location>
        <begin position="103"/>
        <end position="200"/>
    </location>
</feature>
<organism>
    <name type="scientific">Psychromonas ingrahamii (strain DSM 17664 / CCUG 51855 / 37)</name>
    <dbReference type="NCBI Taxonomy" id="357804"/>
    <lineage>
        <taxon>Bacteria</taxon>
        <taxon>Pseudomonadati</taxon>
        <taxon>Pseudomonadota</taxon>
        <taxon>Gammaproteobacteria</taxon>
        <taxon>Alteromonadales</taxon>
        <taxon>Psychromonadaceae</taxon>
        <taxon>Psychromonas</taxon>
    </lineage>
</organism>
<reference key="1">
    <citation type="journal article" date="2008" name="BMC Genomics">
        <title>Genomics of an extreme psychrophile, Psychromonas ingrahamii.</title>
        <authorList>
            <person name="Riley M."/>
            <person name="Staley J.T."/>
            <person name="Danchin A."/>
            <person name="Wang T.Z."/>
            <person name="Brettin T.S."/>
            <person name="Hauser L.J."/>
            <person name="Land M.L."/>
            <person name="Thompson L.S."/>
        </authorList>
    </citation>
    <scope>NUCLEOTIDE SEQUENCE [LARGE SCALE GENOMIC DNA]</scope>
    <source>
        <strain>DSM 17664 / CCUG 51855 / 37</strain>
    </source>
</reference>